<name>SNG3_MOUSE</name>
<accession>Q8R191</accession>
<accession>Q9WVG8</accession>
<reference key="1">
    <citation type="journal article" date="1999" name="J. Biol. Chem.">
        <title>Synaptogyrins regulate Ca2+-dependent exocytosis in PC12 cells.</title>
        <authorList>
            <person name="Sugita S."/>
            <person name="Janz R."/>
            <person name="Suedhof T.C."/>
        </authorList>
    </citation>
    <scope>NUCLEOTIDE SEQUENCE [MRNA]</scope>
    <scope>FUNCTION</scope>
    <scope>TISSUE SPECIFICITY</scope>
    <scope>DEVELOPMENTAL STAGE</scope>
</reference>
<reference key="2">
    <citation type="journal article" date="2005" name="Science">
        <title>The transcriptional landscape of the mammalian genome.</title>
        <authorList>
            <person name="Carninci P."/>
            <person name="Kasukawa T."/>
            <person name="Katayama S."/>
            <person name="Gough J."/>
            <person name="Frith M.C."/>
            <person name="Maeda N."/>
            <person name="Oyama R."/>
            <person name="Ravasi T."/>
            <person name="Lenhard B."/>
            <person name="Wells C."/>
            <person name="Kodzius R."/>
            <person name="Shimokawa K."/>
            <person name="Bajic V.B."/>
            <person name="Brenner S.E."/>
            <person name="Batalov S."/>
            <person name="Forrest A.R."/>
            <person name="Zavolan M."/>
            <person name="Davis M.J."/>
            <person name="Wilming L.G."/>
            <person name="Aidinis V."/>
            <person name="Allen J.E."/>
            <person name="Ambesi-Impiombato A."/>
            <person name="Apweiler R."/>
            <person name="Aturaliya R.N."/>
            <person name="Bailey T.L."/>
            <person name="Bansal M."/>
            <person name="Baxter L."/>
            <person name="Beisel K.W."/>
            <person name="Bersano T."/>
            <person name="Bono H."/>
            <person name="Chalk A.M."/>
            <person name="Chiu K.P."/>
            <person name="Choudhary V."/>
            <person name="Christoffels A."/>
            <person name="Clutterbuck D.R."/>
            <person name="Crowe M.L."/>
            <person name="Dalla E."/>
            <person name="Dalrymple B.P."/>
            <person name="de Bono B."/>
            <person name="Della Gatta G."/>
            <person name="di Bernardo D."/>
            <person name="Down T."/>
            <person name="Engstrom P."/>
            <person name="Fagiolini M."/>
            <person name="Faulkner G."/>
            <person name="Fletcher C.F."/>
            <person name="Fukushima T."/>
            <person name="Furuno M."/>
            <person name="Futaki S."/>
            <person name="Gariboldi M."/>
            <person name="Georgii-Hemming P."/>
            <person name="Gingeras T.R."/>
            <person name="Gojobori T."/>
            <person name="Green R.E."/>
            <person name="Gustincich S."/>
            <person name="Harbers M."/>
            <person name="Hayashi Y."/>
            <person name="Hensch T.K."/>
            <person name="Hirokawa N."/>
            <person name="Hill D."/>
            <person name="Huminiecki L."/>
            <person name="Iacono M."/>
            <person name="Ikeo K."/>
            <person name="Iwama A."/>
            <person name="Ishikawa T."/>
            <person name="Jakt M."/>
            <person name="Kanapin A."/>
            <person name="Katoh M."/>
            <person name="Kawasawa Y."/>
            <person name="Kelso J."/>
            <person name="Kitamura H."/>
            <person name="Kitano H."/>
            <person name="Kollias G."/>
            <person name="Krishnan S.P."/>
            <person name="Kruger A."/>
            <person name="Kummerfeld S.K."/>
            <person name="Kurochkin I.V."/>
            <person name="Lareau L.F."/>
            <person name="Lazarevic D."/>
            <person name="Lipovich L."/>
            <person name="Liu J."/>
            <person name="Liuni S."/>
            <person name="McWilliam S."/>
            <person name="Madan Babu M."/>
            <person name="Madera M."/>
            <person name="Marchionni L."/>
            <person name="Matsuda H."/>
            <person name="Matsuzawa S."/>
            <person name="Miki H."/>
            <person name="Mignone F."/>
            <person name="Miyake S."/>
            <person name="Morris K."/>
            <person name="Mottagui-Tabar S."/>
            <person name="Mulder N."/>
            <person name="Nakano N."/>
            <person name="Nakauchi H."/>
            <person name="Ng P."/>
            <person name="Nilsson R."/>
            <person name="Nishiguchi S."/>
            <person name="Nishikawa S."/>
            <person name="Nori F."/>
            <person name="Ohara O."/>
            <person name="Okazaki Y."/>
            <person name="Orlando V."/>
            <person name="Pang K.C."/>
            <person name="Pavan W.J."/>
            <person name="Pavesi G."/>
            <person name="Pesole G."/>
            <person name="Petrovsky N."/>
            <person name="Piazza S."/>
            <person name="Reed J."/>
            <person name="Reid J.F."/>
            <person name="Ring B.Z."/>
            <person name="Ringwald M."/>
            <person name="Rost B."/>
            <person name="Ruan Y."/>
            <person name="Salzberg S.L."/>
            <person name="Sandelin A."/>
            <person name="Schneider C."/>
            <person name="Schoenbach C."/>
            <person name="Sekiguchi K."/>
            <person name="Semple C.A."/>
            <person name="Seno S."/>
            <person name="Sessa L."/>
            <person name="Sheng Y."/>
            <person name="Shibata Y."/>
            <person name="Shimada H."/>
            <person name="Shimada K."/>
            <person name="Silva D."/>
            <person name="Sinclair B."/>
            <person name="Sperling S."/>
            <person name="Stupka E."/>
            <person name="Sugiura K."/>
            <person name="Sultana R."/>
            <person name="Takenaka Y."/>
            <person name="Taki K."/>
            <person name="Tammoja K."/>
            <person name="Tan S.L."/>
            <person name="Tang S."/>
            <person name="Taylor M.S."/>
            <person name="Tegner J."/>
            <person name="Teichmann S.A."/>
            <person name="Ueda H.R."/>
            <person name="van Nimwegen E."/>
            <person name="Verardo R."/>
            <person name="Wei C.L."/>
            <person name="Yagi K."/>
            <person name="Yamanishi H."/>
            <person name="Zabarovsky E."/>
            <person name="Zhu S."/>
            <person name="Zimmer A."/>
            <person name="Hide W."/>
            <person name="Bult C."/>
            <person name="Grimmond S.M."/>
            <person name="Teasdale R.D."/>
            <person name="Liu E.T."/>
            <person name="Brusic V."/>
            <person name="Quackenbush J."/>
            <person name="Wahlestedt C."/>
            <person name="Mattick J.S."/>
            <person name="Hume D.A."/>
            <person name="Kai C."/>
            <person name="Sasaki D."/>
            <person name="Tomaru Y."/>
            <person name="Fukuda S."/>
            <person name="Kanamori-Katayama M."/>
            <person name="Suzuki M."/>
            <person name="Aoki J."/>
            <person name="Arakawa T."/>
            <person name="Iida J."/>
            <person name="Imamura K."/>
            <person name="Itoh M."/>
            <person name="Kato T."/>
            <person name="Kawaji H."/>
            <person name="Kawagashira N."/>
            <person name="Kawashima T."/>
            <person name="Kojima M."/>
            <person name="Kondo S."/>
            <person name="Konno H."/>
            <person name="Nakano K."/>
            <person name="Ninomiya N."/>
            <person name="Nishio T."/>
            <person name="Okada M."/>
            <person name="Plessy C."/>
            <person name="Shibata K."/>
            <person name="Shiraki T."/>
            <person name="Suzuki S."/>
            <person name="Tagami M."/>
            <person name="Waki K."/>
            <person name="Watahiki A."/>
            <person name="Okamura-Oho Y."/>
            <person name="Suzuki H."/>
            <person name="Kawai J."/>
            <person name="Hayashizaki Y."/>
        </authorList>
    </citation>
    <scope>NUCLEOTIDE SEQUENCE [LARGE SCALE MRNA]</scope>
    <source>
        <strain>C57BL/6J</strain>
        <tissue>Cerebellum</tissue>
    </source>
</reference>
<reference key="3">
    <citation type="journal article" date="2004" name="Genome Res.">
        <title>The status, quality, and expansion of the NIH full-length cDNA project: the Mammalian Gene Collection (MGC).</title>
        <authorList>
            <consortium name="The MGC Project Team"/>
        </authorList>
    </citation>
    <scope>NUCLEOTIDE SEQUENCE [LARGE SCALE MRNA]</scope>
    <source>
        <tissue>Eye</tissue>
    </source>
</reference>
<reference key="4">
    <citation type="submission" date="2007-04" db="UniProtKB">
        <authorList>
            <person name="Lubec G."/>
            <person name="Kang S.U."/>
        </authorList>
    </citation>
    <scope>PROTEIN SEQUENCE OF 11-22; 92-99 AND 133-147</scope>
    <scope>IDENTIFICATION BY MASS SPECTROMETRY</scope>
    <source>
        <strain>C57BL/6J</strain>
        <tissue>Brain</tissue>
    </source>
</reference>
<reference key="5">
    <citation type="journal article" date="2004" name="J. Comp. Neurol.">
        <title>Characterization of synaptogyrin 3 as a new synaptic vesicle protein.</title>
        <authorList>
            <person name="Belizaire R."/>
            <person name="Komanduri C."/>
            <person name="Wooten K."/>
            <person name="Chen M."/>
            <person name="Thaller C."/>
            <person name="Janz R."/>
        </authorList>
    </citation>
    <scope>SUBCELLULAR LOCATION</scope>
</reference>
<reference key="6">
    <citation type="journal article" date="2009" name="J. Neurosci.">
        <title>Physical and functional interaction between the dopamine transporter and the synaptic vesicle protein synaptogyrin-3.</title>
        <authorList>
            <person name="Egana L.A."/>
            <person name="Cuevas R.A."/>
            <person name="Baust T.B."/>
            <person name="Parra L.A."/>
            <person name="Leak R.K."/>
            <person name="Hochendoner S."/>
            <person name="Pena K."/>
            <person name="Quiroz M."/>
            <person name="Hong W.C."/>
            <person name="Dorostkar M.M."/>
            <person name="Janz R."/>
            <person name="Sitte H.H."/>
            <person name="Torres G.E."/>
        </authorList>
    </citation>
    <scope>FUNCTION</scope>
    <scope>INTERACTION WITH SLC6A3</scope>
    <scope>SUBCELLULAR LOCATION</scope>
    <scope>TISSUE SPECIFICITY</scope>
</reference>
<reference key="7">
    <citation type="journal article" date="2010" name="Cell">
        <title>A tissue-specific atlas of mouse protein phosphorylation and expression.</title>
        <authorList>
            <person name="Huttlin E.L."/>
            <person name="Jedrychowski M.P."/>
            <person name="Elias J.E."/>
            <person name="Goswami T."/>
            <person name="Rad R."/>
            <person name="Beausoleil S.A."/>
            <person name="Villen J."/>
            <person name="Haas W."/>
            <person name="Sowa M.E."/>
            <person name="Gygi S.P."/>
        </authorList>
    </citation>
    <scope>IDENTIFICATION BY MASS SPECTROMETRY [LARGE SCALE ANALYSIS]</scope>
    <source>
        <tissue>Brain</tissue>
    </source>
</reference>
<sequence>MEGASFGAGRAGAAFDPVSFARRPQTLLRVVSWVFSIAVFGPIVNEGYVNSDSGPELRCVFNGNAGACRFGVVLGLGAFIACVAFLLLDVRFQQISSVRDRRRAVLLDLGFSGVWSFLWFVGFCFLTNQWQRTTPGPGTAQAGDAARAAIAFSFFSILSWVALTVKALQRFRLGTDMSLFATDQLGTGAAQAYPGYPVGSGVEGTETYQSPPFTETLDTSSKGYQVPAY</sequence>
<feature type="chain" id="PRO_0000183997" description="Synaptogyrin-3">
    <location>
        <begin position="1"/>
        <end position="229"/>
    </location>
</feature>
<feature type="transmembrane region" description="Helical" evidence="2">
    <location>
        <begin position="30"/>
        <end position="50"/>
    </location>
</feature>
<feature type="transmembrane region" description="Helical" evidence="2">
    <location>
        <begin position="70"/>
        <end position="90"/>
    </location>
</feature>
<feature type="transmembrane region" description="Helical" evidence="2">
    <location>
        <begin position="105"/>
        <end position="125"/>
    </location>
</feature>
<feature type="transmembrane region" description="Helical" evidence="2">
    <location>
        <begin position="148"/>
        <end position="168"/>
    </location>
</feature>
<feature type="domain" description="MARVEL" evidence="3">
    <location>
        <begin position="20"/>
        <end position="172"/>
    </location>
</feature>
<feature type="region of interest" description="Disordered" evidence="4">
    <location>
        <begin position="209"/>
        <end position="229"/>
    </location>
</feature>
<feature type="compositionally biased region" description="Polar residues" evidence="4">
    <location>
        <begin position="209"/>
        <end position="223"/>
    </location>
</feature>
<feature type="modified residue" description="N-acetylmethionine" evidence="1">
    <location>
        <position position="1"/>
    </location>
</feature>
<feature type="sequence conflict" description="In Ref. 1; AAD28556." evidence="8" ref="1">
    <original>F</original>
    <variation>L</variation>
    <location>
        <position position="171"/>
    </location>
</feature>
<dbReference type="EMBL" id="AF117207">
    <property type="protein sequence ID" value="AAD28556.1"/>
    <property type="molecule type" value="mRNA"/>
</dbReference>
<dbReference type="EMBL" id="AK048753">
    <property type="protein sequence ID" value="BAC33444.1"/>
    <property type="molecule type" value="mRNA"/>
</dbReference>
<dbReference type="EMBL" id="AK081164">
    <property type="protein sequence ID" value="BAC38151.1"/>
    <property type="molecule type" value="mRNA"/>
</dbReference>
<dbReference type="EMBL" id="AK082167">
    <property type="protein sequence ID" value="BAC38430.1"/>
    <property type="molecule type" value="mRNA"/>
</dbReference>
<dbReference type="EMBL" id="BC025022">
    <property type="protein sequence ID" value="AAH25022.1"/>
    <property type="molecule type" value="mRNA"/>
</dbReference>
<dbReference type="CCDS" id="CCDS28491.1"/>
<dbReference type="RefSeq" id="NP_035652.2">
    <property type="nucleotide sequence ID" value="NM_011522.3"/>
</dbReference>
<dbReference type="SMR" id="Q8R191"/>
<dbReference type="BioGRID" id="203607">
    <property type="interactions" value="7"/>
</dbReference>
<dbReference type="FunCoup" id="Q8R191">
    <property type="interactions" value="363"/>
</dbReference>
<dbReference type="IntAct" id="Q8R191">
    <property type="interactions" value="1"/>
</dbReference>
<dbReference type="STRING" id="10090.ENSMUSP00000007236"/>
<dbReference type="GlyGen" id="Q8R191">
    <property type="glycosylation" value="1 site, 1 O-linked glycan (1 site)"/>
</dbReference>
<dbReference type="iPTMnet" id="Q8R191"/>
<dbReference type="PhosphoSitePlus" id="Q8R191"/>
<dbReference type="SwissPalm" id="Q8R191"/>
<dbReference type="PaxDb" id="10090-ENSMUSP00000007236"/>
<dbReference type="PeptideAtlas" id="Q8R191"/>
<dbReference type="ProteomicsDB" id="261290"/>
<dbReference type="Pumba" id="Q8R191"/>
<dbReference type="DNASU" id="20974"/>
<dbReference type="Ensembl" id="ENSMUST00000007236.5">
    <property type="protein sequence ID" value="ENSMUSP00000007236.5"/>
    <property type="gene ID" value="ENSMUSG00000007021.6"/>
</dbReference>
<dbReference type="GeneID" id="20974"/>
<dbReference type="KEGG" id="mmu:20974"/>
<dbReference type="UCSC" id="uc008axq.1">
    <property type="organism name" value="mouse"/>
</dbReference>
<dbReference type="AGR" id="MGI:1341881"/>
<dbReference type="CTD" id="9143"/>
<dbReference type="MGI" id="MGI:1341881">
    <property type="gene designation" value="Syngr3"/>
</dbReference>
<dbReference type="VEuPathDB" id="HostDB:ENSMUSG00000007021"/>
<dbReference type="eggNOG" id="KOG4016">
    <property type="taxonomic scope" value="Eukaryota"/>
</dbReference>
<dbReference type="GeneTree" id="ENSGT00950000182935"/>
<dbReference type="HOGENOM" id="CLU_079186_0_1_1"/>
<dbReference type="InParanoid" id="Q8R191"/>
<dbReference type="OMA" id="RVTTWIF"/>
<dbReference type="OrthoDB" id="60257at9989"/>
<dbReference type="PhylomeDB" id="Q8R191"/>
<dbReference type="TreeFam" id="TF320995"/>
<dbReference type="BioGRID-ORCS" id="20974">
    <property type="hits" value="8 hits in 78 CRISPR screens"/>
</dbReference>
<dbReference type="CD-CODE" id="CE726F99">
    <property type="entry name" value="Postsynaptic density"/>
</dbReference>
<dbReference type="ChiTaRS" id="Syngr3">
    <property type="organism name" value="mouse"/>
</dbReference>
<dbReference type="PRO" id="PR:Q8R191"/>
<dbReference type="Proteomes" id="UP000000589">
    <property type="component" value="Chromosome 17"/>
</dbReference>
<dbReference type="RNAct" id="Q8R191">
    <property type="molecule type" value="protein"/>
</dbReference>
<dbReference type="Bgee" id="ENSMUSG00000007021">
    <property type="expression patterns" value="Expressed in primary visual cortex and 154 other cell types or tissues"/>
</dbReference>
<dbReference type="GO" id="GO:0031594">
    <property type="term" value="C:neuromuscular junction"/>
    <property type="evidence" value="ECO:0000314"/>
    <property type="project" value="UniProtKB"/>
</dbReference>
<dbReference type="GO" id="GO:0045202">
    <property type="term" value="C:synapse"/>
    <property type="evidence" value="ECO:0000314"/>
    <property type="project" value="MGI"/>
</dbReference>
<dbReference type="GO" id="GO:0008021">
    <property type="term" value="C:synaptic vesicle"/>
    <property type="evidence" value="ECO:0000314"/>
    <property type="project" value="UniProtKB"/>
</dbReference>
<dbReference type="GO" id="GO:0030672">
    <property type="term" value="C:synaptic vesicle membrane"/>
    <property type="evidence" value="ECO:0007669"/>
    <property type="project" value="UniProtKB-SubCell"/>
</dbReference>
<dbReference type="GO" id="GO:0042169">
    <property type="term" value="F:SH2 domain binding"/>
    <property type="evidence" value="ECO:0000314"/>
    <property type="project" value="MGI"/>
</dbReference>
<dbReference type="GO" id="GO:0032411">
    <property type="term" value="P:positive regulation of transporter activity"/>
    <property type="evidence" value="ECO:0000315"/>
    <property type="project" value="UniProtKB"/>
</dbReference>
<dbReference type="GO" id="GO:0045055">
    <property type="term" value="P:regulated exocytosis"/>
    <property type="evidence" value="ECO:0000315"/>
    <property type="project" value="UniProtKB"/>
</dbReference>
<dbReference type="GO" id="GO:0010807">
    <property type="term" value="P:regulation of synaptic vesicle priming"/>
    <property type="evidence" value="ECO:0000314"/>
    <property type="project" value="SynGO"/>
</dbReference>
<dbReference type="InterPro" id="IPR008253">
    <property type="entry name" value="Marvel"/>
</dbReference>
<dbReference type="InterPro" id="IPR016579">
    <property type="entry name" value="Synaptogyrin"/>
</dbReference>
<dbReference type="PANTHER" id="PTHR10838">
    <property type="entry name" value="SYNAPTOGYRIN"/>
    <property type="match status" value="1"/>
</dbReference>
<dbReference type="PANTHER" id="PTHR10838:SF8">
    <property type="entry name" value="SYNAPTOGYRIN-3"/>
    <property type="match status" value="1"/>
</dbReference>
<dbReference type="Pfam" id="PF01284">
    <property type="entry name" value="MARVEL"/>
    <property type="match status" value="1"/>
</dbReference>
<dbReference type="PIRSF" id="PIRSF011282">
    <property type="entry name" value="Synaptogyrin"/>
    <property type="match status" value="1"/>
</dbReference>
<dbReference type="PROSITE" id="PS51225">
    <property type="entry name" value="MARVEL"/>
    <property type="match status" value="1"/>
</dbReference>
<keyword id="KW-0007">Acetylation</keyword>
<keyword id="KW-0968">Cytoplasmic vesicle</keyword>
<keyword id="KW-0903">Direct protein sequencing</keyword>
<keyword id="KW-0472">Membrane</keyword>
<keyword id="KW-1185">Reference proteome</keyword>
<keyword id="KW-0770">Synapse</keyword>
<keyword id="KW-0812">Transmembrane</keyword>
<keyword id="KW-1133">Transmembrane helix</keyword>
<comment type="function">
    <text evidence="5 7">May play a role in regulated exocytosis (PubMed:10383386). May indirectly regulate the activity of the plasma membrane dopamine transporter SLC6A3 and thereby regulate dopamine transport back from the synaptic cleft into the presynaptic terminal (PubMed:19357284).</text>
</comment>
<comment type="subunit">
    <text evidence="7">Interacts (via N-terminus) with SLC6A3 (via N-terminus) (PubMed:19357284). May interact with VMAT2 (PubMed:19357284).</text>
</comment>
<comment type="subcellular location">
    <subcellularLocation>
        <location evidence="6 7">Cytoplasmic vesicle</location>
        <location evidence="6 7">Secretory vesicle</location>
        <location evidence="6 7">Synaptic vesicle membrane</location>
        <topology evidence="2">Multi-pass membrane protein</topology>
    </subcellularLocation>
    <subcellularLocation>
        <location evidence="6">Synapse</location>
    </subcellularLocation>
    <text evidence="6">Found at the neuromuscular synapses.</text>
</comment>
<comment type="tissue specificity">
    <text evidence="5 7">Specifically expressed in brain. Found in the brain across the dorsal and ventral corpus striatum as well as in the cortex.</text>
</comment>
<comment type="developmental stage">
    <text evidence="5">Expression increases during brain development from P2 to adult (at protein level).</text>
</comment>
<comment type="similarity">
    <text evidence="8">Belongs to the synaptogyrin family.</text>
</comment>
<protein>
    <recommendedName>
        <fullName evidence="8">Synaptogyrin-3</fullName>
    </recommendedName>
</protein>
<proteinExistence type="evidence at protein level"/>
<organism>
    <name type="scientific">Mus musculus</name>
    <name type="common">Mouse</name>
    <dbReference type="NCBI Taxonomy" id="10090"/>
    <lineage>
        <taxon>Eukaryota</taxon>
        <taxon>Metazoa</taxon>
        <taxon>Chordata</taxon>
        <taxon>Craniata</taxon>
        <taxon>Vertebrata</taxon>
        <taxon>Euteleostomi</taxon>
        <taxon>Mammalia</taxon>
        <taxon>Eutheria</taxon>
        <taxon>Euarchontoglires</taxon>
        <taxon>Glires</taxon>
        <taxon>Rodentia</taxon>
        <taxon>Myomorpha</taxon>
        <taxon>Muroidea</taxon>
        <taxon>Muridae</taxon>
        <taxon>Murinae</taxon>
        <taxon>Mus</taxon>
        <taxon>Mus</taxon>
    </lineage>
</organism>
<gene>
    <name evidence="9" type="primary">Syngr3</name>
</gene>
<evidence type="ECO:0000250" key="1">
    <source>
        <dbReference type="UniProtKB" id="O43761"/>
    </source>
</evidence>
<evidence type="ECO:0000255" key="2"/>
<evidence type="ECO:0000255" key="3">
    <source>
        <dbReference type="PROSITE-ProRule" id="PRU00581"/>
    </source>
</evidence>
<evidence type="ECO:0000256" key="4">
    <source>
        <dbReference type="SAM" id="MobiDB-lite"/>
    </source>
</evidence>
<evidence type="ECO:0000269" key="5">
    <source>
    </source>
</evidence>
<evidence type="ECO:0000269" key="6">
    <source>
    </source>
</evidence>
<evidence type="ECO:0000269" key="7">
    <source>
    </source>
</evidence>
<evidence type="ECO:0000305" key="8"/>
<evidence type="ECO:0000312" key="9">
    <source>
        <dbReference type="MGI" id="MGI:1341881"/>
    </source>
</evidence>